<name>HIS1_VIBVU</name>
<proteinExistence type="inferred from homology"/>
<comment type="function">
    <text evidence="1">Catalyzes the condensation of ATP and 5-phosphoribose 1-diphosphate to form N'-(5'-phosphoribosyl)-ATP (PR-ATP). Has a crucial role in the pathway because the rate of histidine biosynthesis seems to be controlled primarily by regulation of HisG enzymatic activity.</text>
</comment>
<comment type="catalytic activity">
    <reaction evidence="1">
        <text>1-(5-phospho-beta-D-ribosyl)-ATP + diphosphate = 5-phospho-alpha-D-ribose 1-diphosphate + ATP</text>
        <dbReference type="Rhea" id="RHEA:18473"/>
        <dbReference type="ChEBI" id="CHEBI:30616"/>
        <dbReference type="ChEBI" id="CHEBI:33019"/>
        <dbReference type="ChEBI" id="CHEBI:58017"/>
        <dbReference type="ChEBI" id="CHEBI:73183"/>
        <dbReference type="EC" id="2.4.2.17"/>
    </reaction>
</comment>
<comment type="cofactor">
    <cofactor evidence="1">
        <name>Mg(2+)</name>
        <dbReference type="ChEBI" id="CHEBI:18420"/>
    </cofactor>
</comment>
<comment type="activity regulation">
    <text evidence="1">Feedback inhibited by histidine.</text>
</comment>
<comment type="pathway">
    <text evidence="1">Amino-acid biosynthesis; L-histidine biosynthesis; L-histidine from 5-phospho-alpha-D-ribose 1-diphosphate: step 1/9.</text>
</comment>
<comment type="subcellular location">
    <subcellularLocation>
        <location evidence="1">Cytoplasm</location>
    </subcellularLocation>
</comment>
<comment type="similarity">
    <text evidence="1">Belongs to the ATP phosphoribosyltransferase family. Long subfamily.</text>
</comment>
<evidence type="ECO:0000255" key="1">
    <source>
        <dbReference type="HAMAP-Rule" id="MF_00079"/>
    </source>
</evidence>
<protein>
    <recommendedName>
        <fullName evidence="1">ATP phosphoribosyltransferase</fullName>
        <shortName evidence="1">ATP-PRT</shortName>
        <shortName evidence="1">ATP-PRTase</shortName>
        <ecNumber evidence="1">2.4.2.17</ecNumber>
    </recommendedName>
</protein>
<accession>Q8D8P9</accession>
<organism>
    <name type="scientific">Vibrio vulnificus (strain CMCP6)</name>
    <dbReference type="NCBI Taxonomy" id="216895"/>
    <lineage>
        <taxon>Bacteria</taxon>
        <taxon>Pseudomonadati</taxon>
        <taxon>Pseudomonadota</taxon>
        <taxon>Gammaproteobacteria</taxon>
        <taxon>Vibrionales</taxon>
        <taxon>Vibrionaceae</taxon>
        <taxon>Vibrio</taxon>
    </lineage>
</organism>
<reference key="1">
    <citation type="submission" date="2002-12" db="EMBL/GenBank/DDBJ databases">
        <title>Complete genome sequence of Vibrio vulnificus CMCP6.</title>
        <authorList>
            <person name="Rhee J.H."/>
            <person name="Kim S.Y."/>
            <person name="Chung S.S."/>
            <person name="Kim J.J."/>
            <person name="Moon Y.H."/>
            <person name="Jeong H."/>
            <person name="Choy H.E."/>
        </authorList>
    </citation>
    <scope>NUCLEOTIDE SEQUENCE [LARGE SCALE GENOMIC DNA]</scope>
    <source>
        <strain>CMCP6</strain>
    </source>
</reference>
<sequence length="298" mass="32911">MQTQRLRIAIQKKGRLSEECQGLLKKCGVKFNIMGERLVVHSENMPIDLLLVRDDDIPGLIMDGVVDLGFIGENVLEEVRLERKATGDACQFETLSRLDFGGCRLSIAIDKDEKYNGPQDLAGKRIATTYPQLLKAYMDRQGVPFSTCMLTGSVEVAPRAGLADAIADLVSTGATLEANGLKEAEVIFQSKATLIQRSGEFAQDKQALIEKLLTRMQGVQQAKESKYIMLHAPVDKLEQIKALLPGAEDPTVLPLSAEKQRVAVHLVSTENLFWETMEQLKELGASSILVLPIEKMME</sequence>
<keyword id="KW-0028">Amino-acid biosynthesis</keyword>
<keyword id="KW-0067">ATP-binding</keyword>
<keyword id="KW-0963">Cytoplasm</keyword>
<keyword id="KW-0328">Glycosyltransferase</keyword>
<keyword id="KW-0368">Histidine biosynthesis</keyword>
<keyword id="KW-0460">Magnesium</keyword>
<keyword id="KW-0479">Metal-binding</keyword>
<keyword id="KW-0547">Nucleotide-binding</keyword>
<keyword id="KW-0808">Transferase</keyword>
<gene>
    <name evidence="1" type="primary">hisG</name>
    <name type="ordered locus">VV1_2920</name>
</gene>
<dbReference type="EC" id="2.4.2.17" evidence="1"/>
<dbReference type="EMBL" id="AE016795">
    <property type="protein sequence ID" value="AAO11253.2"/>
    <property type="molecule type" value="Genomic_DNA"/>
</dbReference>
<dbReference type="RefSeq" id="WP_011080740.1">
    <property type="nucleotide sequence ID" value="NC_004459.3"/>
</dbReference>
<dbReference type="SMR" id="Q8D8P9"/>
<dbReference type="KEGG" id="vvu:VV1_2920"/>
<dbReference type="HOGENOM" id="CLU_038115_1_0_6"/>
<dbReference type="UniPathway" id="UPA00031">
    <property type="reaction ID" value="UER00006"/>
</dbReference>
<dbReference type="Proteomes" id="UP000002275">
    <property type="component" value="Chromosome 1"/>
</dbReference>
<dbReference type="GO" id="GO:0005737">
    <property type="term" value="C:cytoplasm"/>
    <property type="evidence" value="ECO:0007669"/>
    <property type="project" value="UniProtKB-SubCell"/>
</dbReference>
<dbReference type="GO" id="GO:0005524">
    <property type="term" value="F:ATP binding"/>
    <property type="evidence" value="ECO:0007669"/>
    <property type="project" value="UniProtKB-KW"/>
</dbReference>
<dbReference type="GO" id="GO:0003879">
    <property type="term" value="F:ATP phosphoribosyltransferase activity"/>
    <property type="evidence" value="ECO:0007669"/>
    <property type="project" value="UniProtKB-UniRule"/>
</dbReference>
<dbReference type="GO" id="GO:0000287">
    <property type="term" value="F:magnesium ion binding"/>
    <property type="evidence" value="ECO:0007669"/>
    <property type="project" value="UniProtKB-UniRule"/>
</dbReference>
<dbReference type="GO" id="GO:0000105">
    <property type="term" value="P:L-histidine biosynthetic process"/>
    <property type="evidence" value="ECO:0007669"/>
    <property type="project" value="UniProtKB-UniRule"/>
</dbReference>
<dbReference type="CDD" id="cd13592">
    <property type="entry name" value="PBP2_HisGL2"/>
    <property type="match status" value="1"/>
</dbReference>
<dbReference type="FunFam" id="3.30.70.120:FF:000002">
    <property type="entry name" value="ATP phosphoribosyltransferase"/>
    <property type="match status" value="1"/>
</dbReference>
<dbReference type="FunFam" id="3.40.190.10:FF:000008">
    <property type="entry name" value="ATP phosphoribosyltransferase"/>
    <property type="match status" value="1"/>
</dbReference>
<dbReference type="Gene3D" id="3.30.70.120">
    <property type="match status" value="1"/>
</dbReference>
<dbReference type="Gene3D" id="3.40.190.10">
    <property type="entry name" value="Periplasmic binding protein-like II"/>
    <property type="match status" value="2"/>
</dbReference>
<dbReference type="HAMAP" id="MF_00079">
    <property type="entry name" value="HisG_Long"/>
    <property type="match status" value="1"/>
</dbReference>
<dbReference type="InterPro" id="IPR020621">
    <property type="entry name" value="ATP-PRT_HisG_long"/>
</dbReference>
<dbReference type="InterPro" id="IPR013820">
    <property type="entry name" value="ATP_PRibTrfase_cat"/>
</dbReference>
<dbReference type="InterPro" id="IPR018198">
    <property type="entry name" value="ATP_PRibTrfase_CS"/>
</dbReference>
<dbReference type="InterPro" id="IPR001348">
    <property type="entry name" value="ATP_PRibTrfase_HisG"/>
</dbReference>
<dbReference type="InterPro" id="IPR013115">
    <property type="entry name" value="HisG_C"/>
</dbReference>
<dbReference type="InterPro" id="IPR011322">
    <property type="entry name" value="N-reg_PII-like_a/b"/>
</dbReference>
<dbReference type="InterPro" id="IPR015867">
    <property type="entry name" value="N-reg_PII/ATP_PRibTrfase_C"/>
</dbReference>
<dbReference type="NCBIfam" id="TIGR00070">
    <property type="entry name" value="hisG"/>
    <property type="match status" value="1"/>
</dbReference>
<dbReference type="NCBIfam" id="TIGR03455">
    <property type="entry name" value="HisG_C-term"/>
    <property type="match status" value="1"/>
</dbReference>
<dbReference type="PANTHER" id="PTHR21403:SF8">
    <property type="entry name" value="ATP PHOSPHORIBOSYLTRANSFERASE"/>
    <property type="match status" value="1"/>
</dbReference>
<dbReference type="PANTHER" id="PTHR21403">
    <property type="entry name" value="ATP PHOSPHORIBOSYLTRANSFERASE ATP-PRTASE"/>
    <property type="match status" value="1"/>
</dbReference>
<dbReference type="Pfam" id="PF01634">
    <property type="entry name" value="HisG"/>
    <property type="match status" value="1"/>
</dbReference>
<dbReference type="Pfam" id="PF08029">
    <property type="entry name" value="HisG_C"/>
    <property type="match status" value="1"/>
</dbReference>
<dbReference type="SUPFAM" id="SSF54913">
    <property type="entry name" value="GlnB-like"/>
    <property type="match status" value="1"/>
</dbReference>
<dbReference type="SUPFAM" id="SSF53850">
    <property type="entry name" value="Periplasmic binding protein-like II"/>
    <property type="match status" value="1"/>
</dbReference>
<dbReference type="PROSITE" id="PS01316">
    <property type="entry name" value="ATP_P_PHORIBOSYLTR"/>
    <property type="match status" value="1"/>
</dbReference>
<feature type="chain" id="PRO_0000151871" description="ATP phosphoribosyltransferase">
    <location>
        <begin position="1"/>
        <end position="298"/>
    </location>
</feature>